<proteinExistence type="inferred from homology"/>
<reference key="1">
    <citation type="journal article" date="2007" name="Genome Biol.">
        <title>Comparison of Francisella tularensis genomes reveals evolutionary events associated with the emergence of human pathogenic strains.</title>
        <authorList>
            <person name="Rohmer L."/>
            <person name="Fong C."/>
            <person name="Abmayr S."/>
            <person name="Wasnick M."/>
            <person name="Larson Freeman T.J."/>
            <person name="Radey M."/>
            <person name="Guina T."/>
            <person name="Svensson K."/>
            <person name="Hayden H.S."/>
            <person name="Jacobs M."/>
            <person name="Gallagher L.A."/>
            <person name="Manoil C."/>
            <person name="Ernst R.K."/>
            <person name="Drees B."/>
            <person name="Buckley D."/>
            <person name="Haugen E."/>
            <person name="Bovee D."/>
            <person name="Zhou Y."/>
            <person name="Chang J."/>
            <person name="Levy R."/>
            <person name="Lim R."/>
            <person name="Gillett W."/>
            <person name="Guenthener D."/>
            <person name="Kang A."/>
            <person name="Shaffer S.A."/>
            <person name="Taylor G."/>
            <person name="Chen J."/>
            <person name="Gallis B."/>
            <person name="D'Argenio D.A."/>
            <person name="Forsman M."/>
            <person name="Olson M.V."/>
            <person name="Goodlett D.R."/>
            <person name="Kaul R."/>
            <person name="Miller S.I."/>
            <person name="Brittnacher M.J."/>
        </authorList>
    </citation>
    <scope>NUCLEOTIDE SEQUENCE [LARGE SCALE GENOMIC DNA]</scope>
    <source>
        <strain>U112</strain>
    </source>
</reference>
<name>TRPB_FRATN</name>
<protein>
    <recommendedName>
        <fullName evidence="1">Tryptophan synthase beta chain</fullName>
        <ecNumber evidence="1">4.2.1.20</ecNumber>
    </recommendedName>
</protein>
<sequence length="396" mass="43006">MSKLNAYFGEYGGQFVPQILVPALDQLEQEFIKAQADESFKQEFKELLQEYAGRPTALTKTRNIVKNTKTTLYLKREDLLHGGAHKTNQVLGQALLAKRMGKKEIIAETGAGQHGVATALACALLDLKCRVYMGAKDVERQSPNVFRMKLMGAEVIPVHSGSATLKDACNEALRDWSANYSKAHYLLGTAAGPHPFPTIVREFQRMIGEETKQQILAKEGRLPDAVIACVGGGSNAIGMFADFIDEKNVKLIGVEPAGKGIETGEHGAPLKHGKTGIFFGMKAPLMQNSDGQIEESYSISAGLDFPSVGPQHAHLLAIGRAEYASATDDEALDAFKLLCKKEGIIPALESSHALAHALKLAYEDPNKEQLLVVNLSGRGDKDIFTVHDILKEKGEI</sequence>
<evidence type="ECO:0000255" key="1">
    <source>
        <dbReference type="HAMAP-Rule" id="MF_00133"/>
    </source>
</evidence>
<accession>A0Q8M6</accession>
<comment type="function">
    <text evidence="1">The beta subunit is responsible for the synthesis of L-tryptophan from indole and L-serine.</text>
</comment>
<comment type="catalytic activity">
    <reaction evidence="1">
        <text>(1S,2R)-1-C-(indol-3-yl)glycerol 3-phosphate + L-serine = D-glyceraldehyde 3-phosphate + L-tryptophan + H2O</text>
        <dbReference type="Rhea" id="RHEA:10532"/>
        <dbReference type="ChEBI" id="CHEBI:15377"/>
        <dbReference type="ChEBI" id="CHEBI:33384"/>
        <dbReference type="ChEBI" id="CHEBI:57912"/>
        <dbReference type="ChEBI" id="CHEBI:58866"/>
        <dbReference type="ChEBI" id="CHEBI:59776"/>
        <dbReference type="EC" id="4.2.1.20"/>
    </reaction>
</comment>
<comment type="cofactor">
    <cofactor evidence="1">
        <name>pyridoxal 5'-phosphate</name>
        <dbReference type="ChEBI" id="CHEBI:597326"/>
    </cofactor>
</comment>
<comment type="pathway">
    <text evidence="1">Amino-acid biosynthesis; L-tryptophan biosynthesis; L-tryptophan from chorismate: step 5/5.</text>
</comment>
<comment type="subunit">
    <text evidence="1">Tetramer of two alpha and two beta chains.</text>
</comment>
<comment type="similarity">
    <text evidence="1">Belongs to the TrpB family.</text>
</comment>
<dbReference type="EC" id="4.2.1.20" evidence="1"/>
<dbReference type="EMBL" id="CP000439">
    <property type="protein sequence ID" value="ABK90591.1"/>
    <property type="molecule type" value="Genomic_DNA"/>
</dbReference>
<dbReference type="RefSeq" id="WP_003040724.1">
    <property type="nucleotide sequence ID" value="NC_008601.1"/>
</dbReference>
<dbReference type="SMR" id="A0Q8M6"/>
<dbReference type="KEGG" id="ftn:FTN_1739"/>
<dbReference type="KEGG" id="ftx:AW25_247"/>
<dbReference type="BioCyc" id="FTUL401614:G1G75-1801-MONOMER"/>
<dbReference type="UniPathway" id="UPA00035">
    <property type="reaction ID" value="UER00044"/>
</dbReference>
<dbReference type="Proteomes" id="UP000000762">
    <property type="component" value="Chromosome"/>
</dbReference>
<dbReference type="GO" id="GO:0005737">
    <property type="term" value="C:cytoplasm"/>
    <property type="evidence" value="ECO:0007669"/>
    <property type="project" value="TreeGrafter"/>
</dbReference>
<dbReference type="GO" id="GO:0004834">
    <property type="term" value="F:tryptophan synthase activity"/>
    <property type="evidence" value="ECO:0007669"/>
    <property type="project" value="UniProtKB-UniRule"/>
</dbReference>
<dbReference type="CDD" id="cd06446">
    <property type="entry name" value="Trp-synth_B"/>
    <property type="match status" value="1"/>
</dbReference>
<dbReference type="FunFam" id="3.40.50.1100:FF:000001">
    <property type="entry name" value="Tryptophan synthase beta chain"/>
    <property type="match status" value="1"/>
</dbReference>
<dbReference type="FunFam" id="3.40.50.1100:FF:000004">
    <property type="entry name" value="Tryptophan synthase beta chain"/>
    <property type="match status" value="1"/>
</dbReference>
<dbReference type="Gene3D" id="3.40.50.1100">
    <property type="match status" value="2"/>
</dbReference>
<dbReference type="HAMAP" id="MF_00133">
    <property type="entry name" value="Trp_synth_beta"/>
    <property type="match status" value="1"/>
</dbReference>
<dbReference type="InterPro" id="IPR006653">
    <property type="entry name" value="Trp_synth_b_CS"/>
</dbReference>
<dbReference type="InterPro" id="IPR006654">
    <property type="entry name" value="Trp_synth_beta"/>
</dbReference>
<dbReference type="InterPro" id="IPR023026">
    <property type="entry name" value="Trp_synth_beta/beta-like"/>
</dbReference>
<dbReference type="InterPro" id="IPR001926">
    <property type="entry name" value="TrpB-like_PALP"/>
</dbReference>
<dbReference type="InterPro" id="IPR036052">
    <property type="entry name" value="TrpB-like_PALP_sf"/>
</dbReference>
<dbReference type="NCBIfam" id="TIGR00263">
    <property type="entry name" value="trpB"/>
    <property type="match status" value="1"/>
</dbReference>
<dbReference type="PANTHER" id="PTHR48077:SF3">
    <property type="entry name" value="TRYPTOPHAN SYNTHASE"/>
    <property type="match status" value="1"/>
</dbReference>
<dbReference type="PANTHER" id="PTHR48077">
    <property type="entry name" value="TRYPTOPHAN SYNTHASE-RELATED"/>
    <property type="match status" value="1"/>
</dbReference>
<dbReference type="Pfam" id="PF00291">
    <property type="entry name" value="PALP"/>
    <property type="match status" value="1"/>
</dbReference>
<dbReference type="PIRSF" id="PIRSF001413">
    <property type="entry name" value="Trp_syn_beta"/>
    <property type="match status" value="1"/>
</dbReference>
<dbReference type="SUPFAM" id="SSF53686">
    <property type="entry name" value="Tryptophan synthase beta subunit-like PLP-dependent enzymes"/>
    <property type="match status" value="1"/>
</dbReference>
<dbReference type="PROSITE" id="PS00168">
    <property type="entry name" value="TRP_SYNTHASE_BETA"/>
    <property type="match status" value="1"/>
</dbReference>
<organism>
    <name type="scientific">Francisella tularensis subsp. novicida (strain U112)</name>
    <dbReference type="NCBI Taxonomy" id="401614"/>
    <lineage>
        <taxon>Bacteria</taxon>
        <taxon>Pseudomonadati</taxon>
        <taxon>Pseudomonadota</taxon>
        <taxon>Gammaproteobacteria</taxon>
        <taxon>Thiotrichales</taxon>
        <taxon>Francisellaceae</taxon>
        <taxon>Francisella</taxon>
    </lineage>
</organism>
<feature type="chain" id="PRO_1000018343" description="Tryptophan synthase beta chain">
    <location>
        <begin position="1"/>
        <end position="396"/>
    </location>
</feature>
<feature type="modified residue" description="N6-(pyridoxal phosphate)lysine" evidence="1">
    <location>
        <position position="86"/>
    </location>
</feature>
<gene>
    <name evidence="1" type="primary">trpB</name>
    <name type="ordered locus">FTN_1739</name>
</gene>
<keyword id="KW-0028">Amino-acid biosynthesis</keyword>
<keyword id="KW-0057">Aromatic amino acid biosynthesis</keyword>
<keyword id="KW-0456">Lyase</keyword>
<keyword id="KW-0663">Pyridoxal phosphate</keyword>
<keyword id="KW-0822">Tryptophan biosynthesis</keyword>